<reference evidence="10" key="1">
    <citation type="journal article" date="2018" name="PLoS ONE">
        <title>Proteomic endorsed transcriptomic profiles of venom glands from Tityus obscurus and T. serrulatus scorpions.</title>
        <authorList>
            <person name="de Oliveira U.C."/>
            <person name="Nishiyama M.Y. Jr."/>
            <person name="Dos Santos M.B.V."/>
            <person name="Santos-da-Silva A.P."/>
            <person name="Chalkidis H.M."/>
            <person name="Souza-Imberg A."/>
            <person name="Candido D.M."/>
            <person name="Yamanouye N."/>
            <person name="Dorce V.A.C."/>
            <person name="Junqueira-de-Azevedo I.L.M."/>
        </authorList>
    </citation>
    <scope>NUCLEOTIDE SEQUENCE [MRNA]</scope>
    <source>
        <tissue>Telson</tissue>
    </source>
</reference>
<reference evidence="11" key="2">
    <citation type="journal article" date="2021" name="Toxicon">
        <title>Novel components of Tityus serrulatus venom: a transcriptomic approach.</title>
        <authorList>
            <person name="Kalapothakis Y."/>
            <person name="Miranda K."/>
            <person name="Pereira A.H."/>
            <person name="Witt A.S.A."/>
            <person name="Marani C."/>
            <person name="Martins A.P."/>
            <person name="Leal H.G."/>
            <person name="Campos-Junior E."/>
            <person name="Pimenta A.M.C."/>
            <person name="Borges A."/>
            <person name="Chavez-Olortegui C."/>
            <person name="Kalapothakis E."/>
        </authorList>
    </citation>
    <scope>NUCLEOTIDE SEQUENCE [MRNA]</scope>
    <source>
        <tissue>Telson</tissue>
    </source>
</reference>
<reference key="3">
    <citation type="journal article" date="2011" name="Toxicon">
        <title>Purification and characterization of Ts15, the first member of a new alpha-KTX subfamily from the venom of the Brazilian scorpion Tityus serrulatus.</title>
        <authorList>
            <person name="Cologna C.T."/>
            <person name="Peigneur S."/>
            <person name="Rosa J.C."/>
            <person name="Selistre-de-Araujo H.S."/>
            <person name="Varanda W.A."/>
            <person name="Tytgat J."/>
            <person name="Arantes E.C."/>
        </authorList>
    </citation>
    <scope>PROTEIN SEQUENCE OF 28-63</scope>
    <scope>FUNCTION</scope>
    <scope>SUBCELLULAR LOCATION</scope>
    <scope>MASS SPECTROMETRY</scope>
    <source>
        <tissue>Venom</tissue>
    </source>
</reference>
<reference key="4">
    <citation type="journal article" date="2013" name="J. Proteome Res.">
        <title>Moving pieces in a venomic puzzle: unveiling post-translationally modified toxins from Tityus serrulatus.</title>
        <authorList>
            <person name="Verano-Braga T."/>
            <person name="Dutra A.A."/>
            <person name="Leon I.R."/>
            <person name="Melo-Braga M.N."/>
            <person name="Roepstorff P."/>
            <person name="Pimenta A.M."/>
            <person name="Kjeldsen F."/>
        </authorList>
    </citation>
    <scope>PROTEIN SEQUENCE OF 49-63</scope>
    <scope>SUBCELLULAR LOCATION</scope>
    <scope>IDENTIFICATION BY MASS SPECTROMETRY</scope>
    <source>
        <tissue>Venom</tissue>
    </source>
</reference>
<reference key="5">
    <citation type="journal article" date="2014" name="Toxicon">
        <title>Influence of post-starvation extraction time and prey-specific diet in Tityus serrulatus scorpion venom composition and hyaluronidase activity.</title>
        <authorList>
            <person name="Pucca M.B."/>
            <person name="Amorim F.G."/>
            <person name="Cerni F.A."/>
            <person name="Bordon K.C.F."/>
            <person name="Cardoso I.A."/>
            <person name="Anjolette F.A."/>
            <person name="Arantes E.C."/>
        </authorList>
    </citation>
    <scope>PROTEIN SEQUENCE OF 34-39</scope>
    <scope>SUBCELLULAR LOCATION</scope>
    <source>
        <tissue>Venom</tissue>
    </source>
</reference>
<keyword id="KW-0903">Direct protein sequencing</keyword>
<keyword id="KW-1015">Disulfide bond</keyword>
<keyword id="KW-0872">Ion channel impairing toxin</keyword>
<keyword id="KW-0528">Neurotoxin</keyword>
<keyword id="KW-0632">Potassium channel impairing toxin</keyword>
<keyword id="KW-0964">Secreted</keyword>
<keyword id="KW-0732">Signal</keyword>
<keyword id="KW-0800">Toxin</keyword>
<keyword id="KW-1220">Voltage-gated potassium channel impairing toxin</keyword>
<organism>
    <name type="scientific">Tityus serrulatus</name>
    <name type="common">Brazilian scorpion</name>
    <dbReference type="NCBI Taxonomy" id="6887"/>
    <lineage>
        <taxon>Eukaryota</taxon>
        <taxon>Metazoa</taxon>
        <taxon>Ecdysozoa</taxon>
        <taxon>Arthropoda</taxon>
        <taxon>Chelicerata</taxon>
        <taxon>Arachnida</taxon>
        <taxon>Scorpiones</taxon>
        <taxon>Buthida</taxon>
        <taxon>Buthoidea</taxon>
        <taxon>Buthidae</taxon>
        <taxon>Tityus</taxon>
    </lineage>
</organism>
<name>KA211_TITSE</name>
<comment type="function">
    <text evidence="3">Reversibly and voltage-independently blocks voltage-gated potassium channels rKv1.2/KCNA2 (73%) (IC(50)=196 nM), hKv1.3/KCNA3 (50%) (IC(50)=508 nM), Shaker IR (30%), rKv1.6/KCNA6 (22%) (at 0.5 uM). Interaction of Ts15 with Kv1.3/KCNA3 is stronger than its interaction with Kv1.2/KCNA2.</text>
</comment>
<comment type="subcellular location">
    <subcellularLocation>
        <location evidence="3 4 5">Secreted</location>
    </subcellularLocation>
</comment>
<comment type="tissue specificity">
    <text evidence="9">Expressed by the venom gland.</text>
</comment>
<comment type="domain">
    <text evidence="7">Has the structural arrangement of an alpha-helix connected to antiparallel beta-sheets by disulfide bonds (CS-alpha/beta).</text>
</comment>
<comment type="mass spectrometry" mass="3956.0" method="Electrospray" evidence="3"/>
<comment type="miscellaneous">
    <text evidence="8">Negative results: does not block voltage-gated sodium channels rNav1.4/SCN4A, hNav1.5/SCN5A, mNav1.6/SCN8A and rNav1.8/SCN10A, and Kv1.1/KCNA1, rKv1.4/KCNA4, rKv1.5/KCNA5, rKv2.1/KCNB1, hKv3.1/KCNC1, rKv4.2/KCND2, rKv4.3/KCND3 and hERG potassium channels, when tested at a concentration of 0.5 uM.</text>
</comment>
<comment type="similarity">
    <text evidence="7">Belongs to the short scorpion toxin superfamily. Potassium channel inhibitor family. Alpha-KTx 21 subfamily.</text>
</comment>
<comment type="sequence caution" evidence="7">
    <conflict type="erroneous initiation">
        <sequence resource="EMBL-CDS" id="JAW07003"/>
    </conflict>
    <text>Truncated N-terminus.</text>
</comment>
<feature type="signal peptide" evidence="2">
    <location>
        <begin position="1"/>
        <end position="27"/>
    </location>
</feature>
<feature type="peptide" id="PRO_0000376048" description="Potassium channel toxin alpha-KTx 21.1" evidence="3">
    <location>
        <begin position="28"/>
        <end position="63"/>
    </location>
</feature>
<feature type="disulfide bond" evidence="1">
    <location>
        <begin position="33"/>
        <end position="53"/>
    </location>
</feature>
<feature type="disulfide bond" evidence="1">
    <location>
        <begin position="38"/>
        <end position="58"/>
    </location>
</feature>
<feature type="disulfide bond" evidence="1">
    <location>
        <begin position="42"/>
        <end position="60"/>
    </location>
</feature>
<evidence type="ECO:0000250" key="1">
    <source>
        <dbReference type="UniProtKB" id="Q8I0L5"/>
    </source>
</evidence>
<evidence type="ECO:0000255" key="2"/>
<evidence type="ECO:0000269" key="3">
    <source>
    </source>
</evidence>
<evidence type="ECO:0000269" key="4">
    <source>
    </source>
</evidence>
<evidence type="ECO:0000269" key="5">
    <source>
    </source>
</evidence>
<evidence type="ECO:0000303" key="6">
    <source>
    </source>
</evidence>
<evidence type="ECO:0000305" key="7"/>
<evidence type="ECO:0000305" key="8">
    <source>
    </source>
</evidence>
<evidence type="ECO:0000305" key="9">
    <source>
    </source>
</evidence>
<evidence type="ECO:0000312" key="10">
    <source>
        <dbReference type="EMBL" id="JAW07003.1"/>
    </source>
</evidence>
<evidence type="ECO:0000312" key="11">
    <source>
        <dbReference type="EMBL" id="QPD99020.1"/>
    </source>
</evidence>
<sequence length="63" mass="7007">MQFSGVVLILISMTLVNFVFFETKVEAGKFGKCKPNICAKTCQTEKGKGMGYCNKTECVCSEW</sequence>
<accession>P86270</accession>
<accession>A0A218QXC6</accession>
<accession>A0A7S8MV48</accession>
<proteinExistence type="evidence at protein level"/>
<dbReference type="EMBL" id="GEUW01000042">
    <property type="protein sequence ID" value="JAW07003.1"/>
    <property type="status" value="ALT_INIT"/>
    <property type="molecule type" value="mRNA"/>
</dbReference>
<dbReference type="EMBL" id="MT081338">
    <property type="protein sequence ID" value="QPD99020.1"/>
    <property type="molecule type" value="mRNA"/>
</dbReference>
<dbReference type="SMR" id="P86270"/>
<dbReference type="GO" id="GO:0005576">
    <property type="term" value="C:extracellular region"/>
    <property type="evidence" value="ECO:0007669"/>
    <property type="project" value="UniProtKB-SubCell"/>
</dbReference>
<dbReference type="GO" id="GO:0015459">
    <property type="term" value="F:potassium channel regulator activity"/>
    <property type="evidence" value="ECO:0007669"/>
    <property type="project" value="UniProtKB-KW"/>
</dbReference>
<dbReference type="GO" id="GO:0090729">
    <property type="term" value="F:toxin activity"/>
    <property type="evidence" value="ECO:0007669"/>
    <property type="project" value="UniProtKB-KW"/>
</dbReference>
<protein>
    <recommendedName>
        <fullName evidence="6">Potassium channel toxin alpha-KTx 21.1</fullName>
    </recommendedName>
    <alternativeName>
        <fullName evidence="8">Tityustoxin-15</fullName>
        <shortName evidence="6">Ts15</shortName>
    </alternativeName>
</protein>